<gene>
    <name type="primary">MMP23B</name>
    <name type="synonym">MMP21</name>
    <name type="synonym">MMP22</name>
</gene>
<protein>
    <recommendedName>
        <fullName>Matrix metalloproteinase-23</fullName>
        <shortName>MMP-23</shortName>
        <ecNumber>3.4.24.-</ecNumber>
    </recommendedName>
    <alternativeName>
        <fullName>Femalysin</fullName>
    </alternativeName>
    <alternativeName>
        <fullName>MIFR-1</fullName>
    </alternativeName>
    <alternativeName>
        <fullName>Matrix metalloproteinase-21</fullName>
        <shortName>MMP-21</shortName>
    </alternativeName>
    <alternativeName>
        <fullName>Matrix metalloproteinase-22</fullName>
        <shortName>MMP-22</shortName>
    </alternativeName>
    <component>
        <recommendedName>
            <fullName>Matrix metalloproteinase-23, soluble form</fullName>
        </recommendedName>
    </component>
</protein>
<sequence>MGRGARVPSEAPGAGVERRWLGAALVALCLLPALVLLARLGAPAVPAWSAAQGDVAALGLSAVPPTRVPGPLAPRRRRYTLTPARLRWDHFNLTYRILSFPRNLLSPRETRRALAAAFRMWSDVSPFSFREVAPEQPSDLRIGFYPINHTDCLVSALHHCFDGPTGELAHAFFPPHGGIHFDDSEYWVLGPTRYSWKKGVWLTDLVHVAAHEIGHALGLMHSQHGRALMHLNATLRGWKALSQDELWGLHRLYGCLDRLFVCASWARRGFCDARRRLMKRLCPSSCDFCYEFPFPTVATTPPPPRTKTRLVPEGRNVTFRCGQKILHKKGKVYWYKDQEPLEFSYPGYLALGEAHLSIIANAVNEGTYTCVVRRQQRVLTTYSWRVRVRG</sequence>
<accession>O75900</accession>
<accession>A2AGN0</accession>
<accession>A2AGN1</accession>
<accession>O75894</accession>
<accession>O75895</accession>
<accession>Q5QPQ8</accession>
<accession>Q76P96</accession>
<accession>Q7LDM6</accession>
<accession>Q7LDM7</accession>
<accession>Q9UBR9</accession>
<accession>Q9UJK8</accession>
<evidence type="ECO:0000250" key="1"/>
<evidence type="ECO:0000255" key="2"/>
<evidence type="ECO:0000255" key="3">
    <source>
        <dbReference type="PROSITE-ProRule" id="PRU01005"/>
    </source>
</evidence>
<evidence type="ECO:0000255" key="4">
    <source>
        <dbReference type="PROSITE-ProRule" id="PRU10095"/>
    </source>
</evidence>
<evidence type="ECO:0000269" key="5">
    <source>
    </source>
</evidence>
<evidence type="ECO:0000269" key="6">
    <source>
    </source>
</evidence>
<evidence type="ECO:0000269" key="7">
    <source>
    </source>
</evidence>
<evidence type="ECO:0000303" key="8">
    <source>
    </source>
</evidence>
<evidence type="ECO:0000305" key="9"/>
<keyword id="KW-0025">Alternative splicing</keyword>
<keyword id="KW-0165">Cleavage on pair of basic residues</keyword>
<keyword id="KW-1015">Disulfide bond</keyword>
<keyword id="KW-0256">Endoplasmic reticulum</keyword>
<keyword id="KW-0325">Glycoprotein</keyword>
<keyword id="KW-0378">Hydrolase</keyword>
<keyword id="KW-0393">Immunoglobulin domain</keyword>
<keyword id="KW-0472">Membrane</keyword>
<keyword id="KW-0479">Metal-binding</keyword>
<keyword id="KW-0482">Metalloprotease</keyword>
<keyword id="KW-0645">Protease</keyword>
<keyword id="KW-1267">Proteomics identification</keyword>
<keyword id="KW-1185">Reference proteome</keyword>
<keyword id="KW-0735">Signal-anchor</keyword>
<keyword id="KW-0812">Transmembrane</keyword>
<keyword id="KW-1133">Transmembrane helix</keyword>
<keyword id="KW-0862">Zinc</keyword>
<keyword id="KW-0865">Zymogen</keyword>
<proteinExistence type="evidence at protein level"/>
<dbReference type="EC" id="3.4.24.-"/>
<dbReference type="EMBL" id="AF055334">
    <property type="protein sequence ID" value="AAC63527.1"/>
    <property type="molecule type" value="Genomic_DNA"/>
</dbReference>
<dbReference type="EMBL" id="AF055334">
    <property type="protein sequence ID" value="AAC63528.1"/>
    <property type="molecule type" value="Genomic_DNA"/>
</dbReference>
<dbReference type="EMBL" id="AF055334">
    <property type="protein sequence ID" value="AAC63529.1"/>
    <property type="molecule type" value="Genomic_DNA"/>
</dbReference>
<dbReference type="EMBL" id="AF056200">
    <property type="protein sequence ID" value="AAC62616.1"/>
    <property type="molecule type" value="mRNA"/>
</dbReference>
<dbReference type="EMBL" id="AF057061">
    <property type="protein sequence ID" value="AAC62617.1"/>
    <property type="molecule type" value="mRNA"/>
</dbReference>
<dbReference type="EMBL" id="AF057062">
    <property type="protein sequence ID" value="AAC62618.1"/>
    <property type="molecule type" value="mRNA"/>
</dbReference>
<dbReference type="EMBL" id="AJ005256">
    <property type="protein sequence ID" value="CAB38176.1"/>
    <property type="molecule type" value="mRNA"/>
</dbReference>
<dbReference type="EMBL" id="AB031068">
    <property type="protein sequence ID" value="BAA92769.1"/>
    <property type="molecule type" value="Genomic_DNA"/>
</dbReference>
<dbReference type="EMBL" id="AB010961">
    <property type="protein sequence ID" value="BAA24833.1"/>
    <property type="molecule type" value="mRNA"/>
</dbReference>
<dbReference type="EMBL" id="AL691432">
    <property type="status" value="NOT_ANNOTATED_CDS"/>
    <property type="molecule type" value="Genomic_DNA"/>
</dbReference>
<dbReference type="EMBL" id="BC025719">
    <property type="protein sequence ID" value="AAH25719.1"/>
    <property type="molecule type" value="mRNA"/>
</dbReference>
<dbReference type="CCDS" id="CCDS30559.1">
    <molecule id="O75900-1"/>
</dbReference>
<dbReference type="RefSeq" id="NP_008914.1">
    <molecule id="O75900-1"/>
    <property type="nucleotide sequence ID" value="NM_006983.2"/>
</dbReference>
<dbReference type="BMRB" id="O75900"/>
<dbReference type="SMR" id="O75900"/>
<dbReference type="BioGRID" id="114082">
    <property type="interactions" value="3"/>
</dbReference>
<dbReference type="FunCoup" id="O75900">
    <property type="interactions" value="74"/>
</dbReference>
<dbReference type="IntAct" id="O75900">
    <property type="interactions" value="1"/>
</dbReference>
<dbReference type="STRING" id="9606.ENSP00000348308"/>
<dbReference type="DrugBank" id="DB00786">
    <property type="generic name" value="Marimastat"/>
</dbReference>
<dbReference type="MEROPS" id="M10.022"/>
<dbReference type="TCDB" id="8.B.14.2.2">
    <property type="family name" value="the sea anemone peptide toxin, class 1 (bgk) family"/>
</dbReference>
<dbReference type="GlyCosmos" id="O75900">
    <property type="glycosylation" value="4 sites, No reported glycans"/>
</dbReference>
<dbReference type="GlyGen" id="O75900">
    <property type="glycosylation" value="5 sites, 1 O-linked glycan (1 site)"/>
</dbReference>
<dbReference type="iPTMnet" id="O75900"/>
<dbReference type="PhosphoSitePlus" id="O75900"/>
<dbReference type="BioMuta" id="HGNC:7170"/>
<dbReference type="CPTAC" id="CPTAC-2612"/>
<dbReference type="MassIVE" id="O75900"/>
<dbReference type="PaxDb" id="9606-ENSP00000348308"/>
<dbReference type="PeptideAtlas" id="O75900"/>
<dbReference type="Antibodypedia" id="3453">
    <property type="antibodies" value="363 antibodies from 32 providers"/>
</dbReference>
<dbReference type="DNASU" id="8510"/>
<dbReference type="Ensembl" id="ENST00000356026.10">
    <molecule id="O75900-1"/>
    <property type="protein sequence ID" value="ENSP00000348308.5"/>
    <property type="gene ID" value="ENSG00000189409.14"/>
</dbReference>
<dbReference type="GeneID" id="8510"/>
<dbReference type="KEGG" id="hsa:8510"/>
<dbReference type="MANE-Select" id="ENST00000356026.10">
    <property type="protein sequence ID" value="ENSP00000348308.5"/>
    <property type="RefSeq nucleotide sequence ID" value="NM_006983.2"/>
    <property type="RefSeq protein sequence ID" value="NP_008914.1"/>
</dbReference>
<dbReference type="UCSC" id="uc001agp.4">
    <molecule id="O75900-1"/>
    <property type="organism name" value="human"/>
</dbReference>
<dbReference type="AGR" id="HGNC:7171"/>
<dbReference type="CTD" id="8510"/>
<dbReference type="DisGeNET" id="8510"/>
<dbReference type="GeneCards" id="MMP23B"/>
<dbReference type="HGNC" id="HGNC:7171">
    <property type="gene designation" value="MMP23B"/>
</dbReference>
<dbReference type="HPA" id="ENSG00000189409">
    <property type="expression patterns" value="Tissue enhanced (ovary)"/>
</dbReference>
<dbReference type="MalaCards" id="MMP23B"/>
<dbReference type="MIM" id="603320">
    <property type="type" value="gene"/>
</dbReference>
<dbReference type="MIM" id="603321">
    <property type="type" value="gene"/>
</dbReference>
<dbReference type="neXtProt" id="NX_O75900"/>
<dbReference type="OpenTargets" id="ENSG00000189409"/>
<dbReference type="Orphanet" id="1606">
    <property type="disease" value="1p36 deletion syndrome"/>
</dbReference>
<dbReference type="PharmGKB" id="PA30880"/>
<dbReference type="VEuPathDB" id="HostDB:ENSG00000189409"/>
<dbReference type="eggNOG" id="KOG1565">
    <property type="taxonomic scope" value="Eukaryota"/>
</dbReference>
<dbReference type="GeneTree" id="ENSGT00940000161187"/>
<dbReference type="HOGENOM" id="CLU_015489_2_1_1"/>
<dbReference type="InParanoid" id="O75900"/>
<dbReference type="OMA" id="HLHHCFD"/>
<dbReference type="OrthoDB" id="65569at2759"/>
<dbReference type="PAN-GO" id="O75900">
    <property type="GO annotations" value="4 GO annotations based on evolutionary models"/>
</dbReference>
<dbReference type="PhylomeDB" id="O75900"/>
<dbReference type="TreeFam" id="TF315428"/>
<dbReference type="PathwayCommons" id="O75900"/>
<dbReference type="SignaLink" id="O75900"/>
<dbReference type="SIGNOR" id="O75900"/>
<dbReference type="BioGRID-ORCS" id="8510">
    <property type="hits" value="17 hits in 1140 CRISPR screens"/>
</dbReference>
<dbReference type="GeneWiki" id="MMP23B"/>
<dbReference type="GenomeRNAi" id="8510"/>
<dbReference type="Pharos" id="O75900">
    <property type="development level" value="Tbio"/>
</dbReference>
<dbReference type="PRO" id="PR:O75900"/>
<dbReference type="Proteomes" id="UP000005640">
    <property type="component" value="Chromosome 1"/>
</dbReference>
<dbReference type="RNAct" id="O75900">
    <property type="molecule type" value="protein"/>
</dbReference>
<dbReference type="Bgee" id="ENSG00000189409">
    <property type="expression patterns" value="Expressed in apex of heart and 96 other cell types or tissues"/>
</dbReference>
<dbReference type="ExpressionAtlas" id="O75900">
    <property type="expression patterns" value="baseline and differential"/>
</dbReference>
<dbReference type="GO" id="GO:0062023">
    <property type="term" value="C:collagen-containing extracellular matrix"/>
    <property type="evidence" value="ECO:0007005"/>
    <property type="project" value="BHF-UCL"/>
</dbReference>
<dbReference type="GO" id="GO:0005789">
    <property type="term" value="C:endoplasmic reticulum membrane"/>
    <property type="evidence" value="ECO:0007669"/>
    <property type="project" value="UniProtKB-SubCell"/>
</dbReference>
<dbReference type="GO" id="GO:0031012">
    <property type="term" value="C:extracellular matrix"/>
    <property type="evidence" value="ECO:0000303"/>
    <property type="project" value="UniProtKB"/>
</dbReference>
<dbReference type="GO" id="GO:0005615">
    <property type="term" value="C:extracellular space"/>
    <property type="evidence" value="ECO:0000318"/>
    <property type="project" value="GO_Central"/>
</dbReference>
<dbReference type="GO" id="GO:0004222">
    <property type="term" value="F:metalloendopeptidase activity"/>
    <property type="evidence" value="ECO:0000314"/>
    <property type="project" value="UniProtKB"/>
</dbReference>
<dbReference type="GO" id="GO:0008237">
    <property type="term" value="F:metallopeptidase activity"/>
    <property type="evidence" value="ECO:0000303"/>
    <property type="project" value="UniProtKB"/>
</dbReference>
<dbReference type="GO" id="GO:0008270">
    <property type="term" value="F:zinc ion binding"/>
    <property type="evidence" value="ECO:0000303"/>
    <property type="project" value="UniProtKB"/>
</dbReference>
<dbReference type="GO" id="GO:0030574">
    <property type="term" value="P:collagen catabolic process"/>
    <property type="evidence" value="ECO:0000318"/>
    <property type="project" value="GO_Central"/>
</dbReference>
<dbReference type="GO" id="GO:0030198">
    <property type="term" value="P:extracellular matrix organization"/>
    <property type="evidence" value="ECO:0000318"/>
    <property type="project" value="GO_Central"/>
</dbReference>
<dbReference type="GO" id="GO:0006508">
    <property type="term" value="P:proteolysis"/>
    <property type="evidence" value="ECO:0007669"/>
    <property type="project" value="UniProtKB-KW"/>
</dbReference>
<dbReference type="CDD" id="cd00096">
    <property type="entry name" value="Ig"/>
    <property type="match status" value="1"/>
</dbReference>
<dbReference type="CDD" id="cd04278">
    <property type="entry name" value="ZnMc_MMP"/>
    <property type="match status" value="1"/>
</dbReference>
<dbReference type="FunFam" id="1.10.10.1940:FF:000001">
    <property type="entry name" value="Matrix metallopeptidase 23B"/>
    <property type="match status" value="1"/>
</dbReference>
<dbReference type="FunFam" id="3.40.390.10:FF:000024">
    <property type="entry name" value="Matrix metallopeptidase 23B"/>
    <property type="match status" value="1"/>
</dbReference>
<dbReference type="FunFam" id="2.60.40.10:FF:000565">
    <property type="entry name" value="Matrix metalloproteinase-23"/>
    <property type="match status" value="1"/>
</dbReference>
<dbReference type="Gene3D" id="1.10.10.1940">
    <property type="match status" value="1"/>
</dbReference>
<dbReference type="Gene3D" id="3.40.390.10">
    <property type="entry name" value="Collagenase (Catalytic Domain)"/>
    <property type="match status" value="1"/>
</dbReference>
<dbReference type="Gene3D" id="2.60.40.10">
    <property type="entry name" value="Immunoglobulins"/>
    <property type="match status" value="1"/>
</dbReference>
<dbReference type="InterPro" id="IPR007110">
    <property type="entry name" value="Ig-like_dom"/>
</dbReference>
<dbReference type="InterPro" id="IPR036179">
    <property type="entry name" value="Ig-like_dom_sf"/>
</dbReference>
<dbReference type="InterPro" id="IPR013783">
    <property type="entry name" value="Ig-like_fold"/>
</dbReference>
<dbReference type="InterPro" id="IPR003599">
    <property type="entry name" value="Ig_sub"/>
</dbReference>
<dbReference type="InterPro" id="IPR033739">
    <property type="entry name" value="M10A_MMP"/>
</dbReference>
<dbReference type="InterPro" id="IPR024079">
    <property type="entry name" value="MetalloPept_cat_dom_sf"/>
</dbReference>
<dbReference type="InterPro" id="IPR001818">
    <property type="entry name" value="Pept_M10_metallopeptidase"/>
</dbReference>
<dbReference type="InterPro" id="IPR021190">
    <property type="entry name" value="Pept_M10A"/>
</dbReference>
<dbReference type="InterPro" id="IPR006026">
    <property type="entry name" value="Peptidase_Metallo"/>
</dbReference>
<dbReference type="InterPro" id="IPR003582">
    <property type="entry name" value="ShKT_dom"/>
</dbReference>
<dbReference type="PANTHER" id="PTHR10201">
    <property type="entry name" value="MATRIX METALLOPROTEINASE"/>
    <property type="match status" value="1"/>
</dbReference>
<dbReference type="PANTHER" id="PTHR10201:SF7">
    <property type="entry name" value="MATRIX METALLOPROTEINASE-23"/>
    <property type="match status" value="1"/>
</dbReference>
<dbReference type="Pfam" id="PF00413">
    <property type="entry name" value="Peptidase_M10"/>
    <property type="match status" value="1"/>
</dbReference>
<dbReference type="Pfam" id="PF01549">
    <property type="entry name" value="ShK"/>
    <property type="match status" value="1"/>
</dbReference>
<dbReference type="PRINTS" id="PR00138">
    <property type="entry name" value="MATRIXIN"/>
</dbReference>
<dbReference type="SMART" id="SM00409">
    <property type="entry name" value="IG"/>
    <property type="match status" value="1"/>
</dbReference>
<dbReference type="SMART" id="SM00254">
    <property type="entry name" value="ShKT"/>
    <property type="match status" value="1"/>
</dbReference>
<dbReference type="SMART" id="SM00235">
    <property type="entry name" value="ZnMc"/>
    <property type="match status" value="1"/>
</dbReference>
<dbReference type="SUPFAM" id="SSF48726">
    <property type="entry name" value="Immunoglobulin"/>
    <property type="match status" value="1"/>
</dbReference>
<dbReference type="SUPFAM" id="SSF55486">
    <property type="entry name" value="Metalloproteases ('zincins'), catalytic domain"/>
    <property type="match status" value="1"/>
</dbReference>
<dbReference type="PROSITE" id="PS50835">
    <property type="entry name" value="IG_LIKE"/>
    <property type="match status" value="1"/>
</dbReference>
<dbReference type="PROSITE" id="PS51670">
    <property type="entry name" value="SHKT"/>
    <property type="match status" value="1"/>
</dbReference>
<dbReference type="PROSITE" id="PS00142">
    <property type="entry name" value="ZINC_PROTEASE"/>
    <property type="match status" value="1"/>
</dbReference>
<comment type="function">
    <text evidence="1">Protease. May regulate the surface expression of some potassium channels by retaining them in the endoplasmic reticulum (By similarity).</text>
</comment>
<comment type="cofactor">
    <cofactor evidence="1">
        <name>Zn(2+)</name>
        <dbReference type="ChEBI" id="CHEBI:29105"/>
    </cofactor>
    <text evidence="1">Binds 1 zinc ion per subunit.</text>
</comment>
<comment type="activity regulation">
    <text evidence="1">Inhibited by TIMP2.</text>
</comment>
<comment type="subcellular location">
    <subcellularLocation>
        <location evidence="1">Endoplasmic reticulum membrane</location>
        <topology evidence="1">Single-pass type II membrane protein</topology>
    </subcellularLocation>
    <subcellularLocation>
        <location evidence="5">Membrane</location>
        <topology evidence="5">Single-pass type II membrane protein</topology>
    </subcellularLocation>
    <text evidence="9">A secreted form produced by proteolytic cleavage may also exist.</text>
</comment>
<comment type="alternative products">
    <event type="alternative splicing"/>
    <isoform>
        <id>O75900-1</id>
        <name>1</name>
        <name>MMP21/22A</name>
        <sequence type="displayed"/>
    </isoform>
    <isoform>
        <id>O75900-2</id>
        <name>2</name>
        <name>MMP21/22B</name>
        <sequence type="described" ref="VSP_021411"/>
    </isoform>
    <isoform>
        <id>O75900-3</id>
        <name>3</name>
        <name>MMP21/22C</name>
        <sequence type="described" ref="VSP_021412"/>
    </isoform>
</comment>
<comment type="tissue specificity">
    <text evidence="7">Predominantly expressed in ovary, testis and prostate.</text>
</comment>
<comment type="domain">
    <text evidence="1">The ShKT domain associates with, and blocks several potassium channels in the nanomolar to low micromolar range. The relative affinity is Kv1.6 &gt; Kv1.3 &gt; Kv1.1 = Kv3.2 &gt; Kv1.4 (By similarity).</text>
</comment>
<comment type="PTM">
    <text evidence="5">N-glycosylated.</text>
</comment>
<comment type="PTM">
    <text evidence="1">Proteolytic cleavage might yield an active form.</text>
</comment>
<comment type="similarity">
    <text evidence="9">Belongs to the peptidase M10A family.</text>
</comment>
<name>MMP23_HUMAN</name>
<reference key="1">
    <citation type="journal article" date="1998" name="Genomics">
        <title>Isolation and characterization of two novel metalloproteinase genes linked to the Cdc2L locus on human chromosome 1p36.3.</title>
        <authorList>
            <person name="Gururajan R."/>
            <person name="Grenet J."/>
            <person name="Lahti J.M."/>
            <person name="Kidd V.J."/>
        </authorList>
    </citation>
    <scope>NUCLEOTIDE SEQUENCE [GENOMIC DNA / MRNA] (ISOFORMS 1; 2 AND 3)</scope>
    <scope>VARIANT LEU-91</scope>
</reference>
<reference key="2">
    <citation type="journal article" date="1999" name="J. Biol. Chem.">
        <title>Cloning and characterization of human MMP-23, a new matrix metalloproteinase predominantly expressed in reproductive tissues and lacking conserved domains in other family members.</title>
        <authorList>
            <person name="Velasco G."/>
            <person name="Pendas A.M."/>
            <person name="Fueyo A."/>
            <person name="Knaueper V."/>
            <person name="Murphy G."/>
            <person name="Lopez-Otin C."/>
        </authorList>
    </citation>
    <scope>NUCLEOTIDE SEQUENCE [MRNA] (ISOFORM 1)</scope>
    <scope>TISSUE SPECIFICITY</scope>
    <source>
        <tissue>Ovary</tissue>
    </source>
</reference>
<reference key="3">
    <citation type="journal article" date="2001" name="Mol. Endocrinol.">
        <title>Cloning and characterization of a rat ortholog of MMP-23 (matrix metalloproteinase-23), a unique type of membrane-anchored matrix metalloproteinase and conditioned switching of its expression during the ovarian follicular development.</title>
        <authorList>
            <person name="Ohnishi J."/>
            <person name="Ohnishi E."/>
            <person name="Jin M."/>
            <person name="Hirano W."/>
            <person name="Nakane D."/>
            <person name="Matsui H."/>
            <person name="Kimura A."/>
            <person name="Sawa H."/>
            <person name="Nakayama K."/>
            <person name="Shibuya H."/>
            <person name="Nagashima K."/>
            <person name="Takahashi T."/>
        </authorList>
    </citation>
    <scope>NUCLEOTIDE SEQUENCE [GENOMIC DNA / MRNA] (ISOFORM 1)</scope>
    <scope>GLYCOSYLATION</scope>
    <scope>SUBCELLULAR LOCATION</scope>
    <scope>MUTAGENESIS OF ARG-78</scope>
    <source>
        <tissue>Uterus</tissue>
    </source>
</reference>
<reference key="4">
    <citation type="journal article" date="2006" name="Nature">
        <title>The DNA sequence and biological annotation of human chromosome 1.</title>
        <authorList>
            <person name="Gregory S.G."/>
            <person name="Barlow K.F."/>
            <person name="McLay K.E."/>
            <person name="Kaul R."/>
            <person name="Swarbreck D."/>
            <person name="Dunham A."/>
            <person name="Scott C.E."/>
            <person name="Howe K.L."/>
            <person name="Woodfine K."/>
            <person name="Spencer C.C.A."/>
            <person name="Jones M.C."/>
            <person name="Gillson C."/>
            <person name="Searle S."/>
            <person name="Zhou Y."/>
            <person name="Kokocinski F."/>
            <person name="McDonald L."/>
            <person name="Evans R."/>
            <person name="Phillips K."/>
            <person name="Atkinson A."/>
            <person name="Cooper R."/>
            <person name="Jones C."/>
            <person name="Hall R.E."/>
            <person name="Andrews T.D."/>
            <person name="Lloyd C."/>
            <person name="Ainscough R."/>
            <person name="Almeida J.P."/>
            <person name="Ambrose K.D."/>
            <person name="Anderson F."/>
            <person name="Andrew R.W."/>
            <person name="Ashwell R.I.S."/>
            <person name="Aubin K."/>
            <person name="Babbage A.K."/>
            <person name="Bagguley C.L."/>
            <person name="Bailey J."/>
            <person name="Beasley H."/>
            <person name="Bethel G."/>
            <person name="Bird C.P."/>
            <person name="Bray-Allen S."/>
            <person name="Brown J.Y."/>
            <person name="Brown A.J."/>
            <person name="Buckley D."/>
            <person name="Burton J."/>
            <person name="Bye J."/>
            <person name="Carder C."/>
            <person name="Chapman J.C."/>
            <person name="Clark S.Y."/>
            <person name="Clarke G."/>
            <person name="Clee C."/>
            <person name="Cobley V."/>
            <person name="Collier R.E."/>
            <person name="Corby N."/>
            <person name="Coville G.J."/>
            <person name="Davies J."/>
            <person name="Deadman R."/>
            <person name="Dunn M."/>
            <person name="Earthrowl M."/>
            <person name="Ellington A.G."/>
            <person name="Errington H."/>
            <person name="Frankish A."/>
            <person name="Frankland J."/>
            <person name="French L."/>
            <person name="Garner P."/>
            <person name="Garnett J."/>
            <person name="Gay L."/>
            <person name="Ghori M.R.J."/>
            <person name="Gibson R."/>
            <person name="Gilby L.M."/>
            <person name="Gillett W."/>
            <person name="Glithero R.J."/>
            <person name="Grafham D.V."/>
            <person name="Griffiths C."/>
            <person name="Griffiths-Jones S."/>
            <person name="Grocock R."/>
            <person name="Hammond S."/>
            <person name="Harrison E.S.I."/>
            <person name="Hart E."/>
            <person name="Haugen E."/>
            <person name="Heath P.D."/>
            <person name="Holmes S."/>
            <person name="Holt K."/>
            <person name="Howden P.J."/>
            <person name="Hunt A.R."/>
            <person name="Hunt S.E."/>
            <person name="Hunter G."/>
            <person name="Isherwood J."/>
            <person name="James R."/>
            <person name="Johnson C."/>
            <person name="Johnson D."/>
            <person name="Joy A."/>
            <person name="Kay M."/>
            <person name="Kershaw J.K."/>
            <person name="Kibukawa M."/>
            <person name="Kimberley A.M."/>
            <person name="King A."/>
            <person name="Knights A.J."/>
            <person name="Lad H."/>
            <person name="Laird G."/>
            <person name="Lawlor S."/>
            <person name="Leongamornlert D.A."/>
            <person name="Lloyd D.M."/>
            <person name="Loveland J."/>
            <person name="Lovell J."/>
            <person name="Lush M.J."/>
            <person name="Lyne R."/>
            <person name="Martin S."/>
            <person name="Mashreghi-Mohammadi M."/>
            <person name="Matthews L."/>
            <person name="Matthews N.S.W."/>
            <person name="McLaren S."/>
            <person name="Milne S."/>
            <person name="Mistry S."/>
            <person name="Moore M.J.F."/>
            <person name="Nickerson T."/>
            <person name="O'Dell C.N."/>
            <person name="Oliver K."/>
            <person name="Palmeiri A."/>
            <person name="Palmer S.A."/>
            <person name="Parker A."/>
            <person name="Patel D."/>
            <person name="Pearce A.V."/>
            <person name="Peck A.I."/>
            <person name="Pelan S."/>
            <person name="Phelps K."/>
            <person name="Phillimore B.J."/>
            <person name="Plumb R."/>
            <person name="Rajan J."/>
            <person name="Raymond C."/>
            <person name="Rouse G."/>
            <person name="Saenphimmachak C."/>
            <person name="Sehra H.K."/>
            <person name="Sheridan E."/>
            <person name="Shownkeen R."/>
            <person name="Sims S."/>
            <person name="Skuce C.D."/>
            <person name="Smith M."/>
            <person name="Steward C."/>
            <person name="Subramanian S."/>
            <person name="Sycamore N."/>
            <person name="Tracey A."/>
            <person name="Tromans A."/>
            <person name="Van Helmond Z."/>
            <person name="Wall M."/>
            <person name="Wallis J.M."/>
            <person name="White S."/>
            <person name="Whitehead S.L."/>
            <person name="Wilkinson J.E."/>
            <person name="Willey D.L."/>
            <person name="Williams H."/>
            <person name="Wilming L."/>
            <person name="Wray P.W."/>
            <person name="Wu Z."/>
            <person name="Coulson A."/>
            <person name="Vaudin M."/>
            <person name="Sulston J.E."/>
            <person name="Durbin R.M."/>
            <person name="Hubbard T."/>
            <person name="Wooster R."/>
            <person name="Dunham I."/>
            <person name="Carter N.P."/>
            <person name="McVean G."/>
            <person name="Ross M.T."/>
            <person name="Harrow J."/>
            <person name="Olson M.V."/>
            <person name="Beck S."/>
            <person name="Rogers J."/>
            <person name="Bentley D.R."/>
        </authorList>
    </citation>
    <scope>NUCLEOTIDE SEQUENCE [LARGE SCALE GENOMIC DNA]</scope>
</reference>
<reference key="5">
    <citation type="journal article" date="2004" name="Genome Res.">
        <title>The status, quality, and expansion of the NIH full-length cDNA project: the Mammalian Gene Collection (MGC).</title>
        <authorList>
            <consortium name="The MGC Project Team"/>
        </authorList>
    </citation>
    <scope>NUCLEOTIDE SEQUENCE [LARGE SCALE MRNA] (ISOFORM 1)</scope>
    <source>
        <tissue>Pancreas</tissue>
    </source>
</reference>
<feature type="chain" id="PRO_0000259513" description="Matrix metalloproteinase-23">
    <location>
        <begin position="1"/>
        <end position="390"/>
    </location>
</feature>
<feature type="propeptide" id="PRO_0000259514" evidence="2">
    <location>
        <begin position="1"/>
        <end position="78"/>
    </location>
</feature>
<feature type="chain" id="PRO_0000259515" description="Matrix metalloproteinase-23, soluble form">
    <location>
        <begin position="79"/>
        <end position="390"/>
    </location>
</feature>
<feature type="topological domain" description="Cytoplasmic" evidence="2">
    <location>
        <begin position="1"/>
        <end position="19"/>
    </location>
</feature>
<feature type="transmembrane region" description="Helical; Signal-anchor for type II membrane protein" evidence="2">
    <location>
        <begin position="20"/>
        <end position="40"/>
    </location>
</feature>
<feature type="topological domain" description="Lumenal" evidence="2">
    <location>
        <begin position="41"/>
        <end position="390"/>
    </location>
</feature>
<feature type="domain" description="ShKT" evidence="3">
    <location>
        <begin position="255"/>
        <end position="289"/>
    </location>
</feature>
<feature type="domain" description="Ig-like C2-type">
    <location>
        <begin position="295"/>
        <end position="380"/>
    </location>
</feature>
<feature type="active site" evidence="4">
    <location>
        <position position="212"/>
    </location>
</feature>
<feature type="binding site" evidence="4">
    <location>
        <position position="211"/>
    </location>
    <ligand>
        <name>Zn(2+)</name>
        <dbReference type="ChEBI" id="CHEBI:29105"/>
        <note>catalytic</note>
    </ligand>
</feature>
<feature type="binding site" evidence="4">
    <location>
        <position position="215"/>
    </location>
    <ligand>
        <name>Zn(2+)</name>
        <dbReference type="ChEBI" id="CHEBI:29105"/>
        <note>catalytic</note>
    </ligand>
</feature>
<feature type="binding site" evidence="4">
    <location>
        <position position="221"/>
    </location>
    <ligand>
        <name>Zn(2+)</name>
        <dbReference type="ChEBI" id="CHEBI:29105"/>
        <note>catalytic</note>
    </ligand>
</feature>
<feature type="site" description="Cleavage; by furin-like protease" evidence="2">
    <location>
        <begin position="78"/>
        <end position="79"/>
    </location>
</feature>
<feature type="glycosylation site" description="N-linked (GlcNAc...) asparagine" evidence="2">
    <location>
        <position position="92"/>
    </location>
</feature>
<feature type="glycosylation site" description="N-linked (GlcNAc...) asparagine" evidence="2">
    <location>
        <position position="148"/>
    </location>
</feature>
<feature type="glycosylation site" description="N-linked (GlcNAc...) asparagine" evidence="2">
    <location>
        <position position="232"/>
    </location>
</feature>
<feature type="glycosylation site" description="N-linked (GlcNAc...) asparagine" evidence="2">
    <location>
        <position position="316"/>
    </location>
</feature>
<feature type="disulfide bond" evidence="1">
    <location>
        <begin position="255"/>
        <end position="289"/>
    </location>
</feature>
<feature type="disulfide bond" evidence="1">
    <location>
        <begin position="262"/>
        <end position="282"/>
    </location>
</feature>
<feature type="disulfide bond" evidence="1">
    <location>
        <begin position="271"/>
        <end position="286"/>
    </location>
</feature>
<feature type="disulfide bond" evidence="1">
    <location>
        <begin position="321"/>
        <end position="370"/>
    </location>
</feature>
<feature type="splice variant" id="VSP_021411" description="In isoform 2." evidence="8">
    <original>G</original>
    <variation>GDRPGSSWRPLLCSTVGCRGRALGQTAGGTFRGGGCHWSLAG</variation>
    <location>
        <position position="199"/>
    </location>
</feature>
<feature type="splice variant" id="VSP_021412" description="In isoform 3." evidence="8">
    <original>G</original>
    <variation>GESLCRAGGRGPGGPEPGVLPTLPIG</variation>
    <location>
        <position position="254"/>
    </location>
</feature>
<feature type="sequence variant" id="VAR_028948" evidence="6">
    <original>F</original>
    <variation>L</variation>
    <location>
        <position position="91"/>
    </location>
</feature>
<feature type="mutagenesis site" description="Abolishes processing of soluble form." evidence="5">
    <original>R</original>
    <variation>G</variation>
    <location>
        <position position="78"/>
    </location>
</feature>
<organism>
    <name type="scientific">Homo sapiens</name>
    <name type="common">Human</name>
    <dbReference type="NCBI Taxonomy" id="9606"/>
    <lineage>
        <taxon>Eukaryota</taxon>
        <taxon>Metazoa</taxon>
        <taxon>Chordata</taxon>
        <taxon>Craniata</taxon>
        <taxon>Vertebrata</taxon>
        <taxon>Euteleostomi</taxon>
        <taxon>Mammalia</taxon>
        <taxon>Eutheria</taxon>
        <taxon>Euarchontoglires</taxon>
        <taxon>Primates</taxon>
        <taxon>Haplorrhini</taxon>
        <taxon>Catarrhini</taxon>
        <taxon>Hominidae</taxon>
        <taxon>Homo</taxon>
    </lineage>
</organism>